<reference key="1">
    <citation type="submission" date="2007-07" db="EMBL/GenBank/DDBJ databases">
        <title>Complete genome sequence of Campylobacter hominis ATCC BAA-381, a commensal isolated from the human gastrointestinal tract.</title>
        <authorList>
            <person name="Fouts D.E."/>
            <person name="Mongodin E.F."/>
            <person name="Puiu D."/>
            <person name="Sebastian Y."/>
            <person name="Miller W.G."/>
            <person name="Mandrell R.E."/>
            <person name="Nelson K.E."/>
        </authorList>
    </citation>
    <scope>NUCLEOTIDE SEQUENCE [LARGE SCALE GENOMIC DNA]</scope>
    <source>
        <strain>ATCC BAA-381 / DSM 21671 / CCUG 45161 / LMG 19568 / NCTC 13146 / CH001A</strain>
    </source>
</reference>
<feature type="chain" id="PRO_1000203850" description="Methionyl-tRNA formyltransferase">
    <location>
        <begin position="1"/>
        <end position="302"/>
    </location>
</feature>
<feature type="binding site" evidence="1">
    <location>
        <begin position="109"/>
        <end position="112"/>
    </location>
    <ligand>
        <name>(6S)-5,6,7,8-tetrahydrofolate</name>
        <dbReference type="ChEBI" id="CHEBI:57453"/>
    </ligand>
</feature>
<name>FMT_CAMHC</name>
<organism>
    <name type="scientific">Campylobacter hominis (strain ATCC BAA-381 / DSM 21671 / CCUG 45161 / LMG 19568 / NCTC 13146 / CH001A)</name>
    <dbReference type="NCBI Taxonomy" id="360107"/>
    <lineage>
        <taxon>Bacteria</taxon>
        <taxon>Pseudomonadati</taxon>
        <taxon>Campylobacterota</taxon>
        <taxon>Epsilonproteobacteria</taxon>
        <taxon>Campylobacterales</taxon>
        <taxon>Campylobacteraceae</taxon>
        <taxon>Campylobacter</taxon>
    </lineage>
</organism>
<accession>A7I168</accession>
<dbReference type="EC" id="2.1.2.9" evidence="1"/>
<dbReference type="EMBL" id="CP000776">
    <property type="protein sequence ID" value="ABS51682.1"/>
    <property type="molecule type" value="Genomic_DNA"/>
</dbReference>
<dbReference type="RefSeq" id="WP_012108546.1">
    <property type="nucleotide sequence ID" value="NC_009714.1"/>
</dbReference>
<dbReference type="SMR" id="A7I168"/>
<dbReference type="STRING" id="360107.CHAB381_0678"/>
<dbReference type="KEGG" id="cha:CHAB381_0678"/>
<dbReference type="eggNOG" id="COG0223">
    <property type="taxonomic scope" value="Bacteria"/>
</dbReference>
<dbReference type="HOGENOM" id="CLU_033347_1_1_7"/>
<dbReference type="OrthoDB" id="9802815at2"/>
<dbReference type="Proteomes" id="UP000002407">
    <property type="component" value="Chromosome"/>
</dbReference>
<dbReference type="GO" id="GO:0005829">
    <property type="term" value="C:cytosol"/>
    <property type="evidence" value="ECO:0007669"/>
    <property type="project" value="TreeGrafter"/>
</dbReference>
<dbReference type="GO" id="GO:0004479">
    <property type="term" value="F:methionyl-tRNA formyltransferase activity"/>
    <property type="evidence" value="ECO:0007669"/>
    <property type="project" value="UniProtKB-UniRule"/>
</dbReference>
<dbReference type="CDD" id="cd08646">
    <property type="entry name" value="FMT_core_Met-tRNA-FMT_N"/>
    <property type="match status" value="1"/>
</dbReference>
<dbReference type="CDD" id="cd08704">
    <property type="entry name" value="Met_tRNA_FMT_C"/>
    <property type="match status" value="1"/>
</dbReference>
<dbReference type="Gene3D" id="3.40.50.12230">
    <property type="match status" value="1"/>
</dbReference>
<dbReference type="HAMAP" id="MF_00182">
    <property type="entry name" value="Formyl_trans"/>
    <property type="match status" value="1"/>
</dbReference>
<dbReference type="InterPro" id="IPR005794">
    <property type="entry name" value="Fmt"/>
</dbReference>
<dbReference type="InterPro" id="IPR005793">
    <property type="entry name" value="Formyl_trans_C"/>
</dbReference>
<dbReference type="InterPro" id="IPR002376">
    <property type="entry name" value="Formyl_transf_N"/>
</dbReference>
<dbReference type="InterPro" id="IPR036477">
    <property type="entry name" value="Formyl_transf_N_sf"/>
</dbReference>
<dbReference type="InterPro" id="IPR011034">
    <property type="entry name" value="Formyl_transferase-like_C_sf"/>
</dbReference>
<dbReference type="InterPro" id="IPR044135">
    <property type="entry name" value="Met-tRNA-FMT_C"/>
</dbReference>
<dbReference type="InterPro" id="IPR041711">
    <property type="entry name" value="Met-tRNA-FMT_N"/>
</dbReference>
<dbReference type="NCBIfam" id="TIGR00460">
    <property type="entry name" value="fmt"/>
    <property type="match status" value="1"/>
</dbReference>
<dbReference type="PANTHER" id="PTHR11138">
    <property type="entry name" value="METHIONYL-TRNA FORMYLTRANSFERASE"/>
    <property type="match status" value="1"/>
</dbReference>
<dbReference type="PANTHER" id="PTHR11138:SF5">
    <property type="entry name" value="METHIONYL-TRNA FORMYLTRANSFERASE, MITOCHONDRIAL"/>
    <property type="match status" value="1"/>
</dbReference>
<dbReference type="Pfam" id="PF02911">
    <property type="entry name" value="Formyl_trans_C"/>
    <property type="match status" value="1"/>
</dbReference>
<dbReference type="Pfam" id="PF00551">
    <property type="entry name" value="Formyl_trans_N"/>
    <property type="match status" value="1"/>
</dbReference>
<dbReference type="SUPFAM" id="SSF50486">
    <property type="entry name" value="FMT C-terminal domain-like"/>
    <property type="match status" value="1"/>
</dbReference>
<dbReference type="SUPFAM" id="SSF53328">
    <property type="entry name" value="Formyltransferase"/>
    <property type="match status" value="1"/>
</dbReference>
<keyword id="KW-0648">Protein biosynthesis</keyword>
<keyword id="KW-1185">Reference proteome</keyword>
<keyword id="KW-0808">Transferase</keyword>
<gene>
    <name evidence="1" type="primary">fmt</name>
    <name type="ordered locus">CHAB381_0678</name>
</gene>
<protein>
    <recommendedName>
        <fullName evidence="1">Methionyl-tRNA formyltransferase</fullName>
        <ecNumber evidence="1">2.1.2.9</ecNumber>
    </recommendedName>
</protein>
<comment type="function">
    <text evidence="1">Attaches a formyl group to the free amino group of methionyl-tRNA(fMet). The formyl group appears to play a dual role in the initiator identity of N-formylmethionyl-tRNA by promoting its recognition by IF2 and preventing the misappropriation of this tRNA by the elongation apparatus.</text>
</comment>
<comment type="catalytic activity">
    <reaction evidence="1">
        <text>L-methionyl-tRNA(fMet) + (6R)-10-formyltetrahydrofolate = N-formyl-L-methionyl-tRNA(fMet) + (6S)-5,6,7,8-tetrahydrofolate + H(+)</text>
        <dbReference type="Rhea" id="RHEA:24380"/>
        <dbReference type="Rhea" id="RHEA-COMP:9952"/>
        <dbReference type="Rhea" id="RHEA-COMP:9953"/>
        <dbReference type="ChEBI" id="CHEBI:15378"/>
        <dbReference type="ChEBI" id="CHEBI:57453"/>
        <dbReference type="ChEBI" id="CHEBI:78530"/>
        <dbReference type="ChEBI" id="CHEBI:78844"/>
        <dbReference type="ChEBI" id="CHEBI:195366"/>
        <dbReference type="EC" id="2.1.2.9"/>
    </reaction>
</comment>
<comment type="similarity">
    <text evidence="1">Belongs to the Fmt family.</text>
</comment>
<evidence type="ECO:0000255" key="1">
    <source>
        <dbReference type="HAMAP-Rule" id="MF_00182"/>
    </source>
</evidence>
<proteinExistence type="inferred from homology"/>
<sequence>MKIVFMGTPEYATAILRALFENNFKISAVFTQPDKPVGRKQILTPPDVKKFLLESHADTPIFQPSNIKTPEIAKKICEFSPDFIVVAAYGQILPLEILEICPCINLHASILPKFRGASPIQSAILEGEKISGVTAMKMGAGLDDGDILGFSFCGIQKLDESEVFHKFGNVAAKLCIKILQNFDDIAPLKQKNVLSSKCKKIKKTDGLVKFSDSADEISAKFSAFKTWPGIFLENGTKLLEIRKFSDEKKEFGKISHITKDGFTLAVKDGEIEILKLQEPSKKAILARDFINGKRLKIGDRIS</sequence>